<reference key="1">
    <citation type="journal article" date="2002" name="Nature">
        <title>Comparison of the genomes of two Xanthomonas pathogens with differing host specificities.</title>
        <authorList>
            <person name="da Silva A.C.R."/>
            <person name="Ferro J.A."/>
            <person name="Reinach F.C."/>
            <person name="Farah C.S."/>
            <person name="Furlan L.R."/>
            <person name="Quaggio R.B."/>
            <person name="Monteiro-Vitorello C.B."/>
            <person name="Van Sluys M.A."/>
            <person name="Almeida N.F. Jr."/>
            <person name="Alves L.M.C."/>
            <person name="do Amaral A.M."/>
            <person name="Bertolini M.C."/>
            <person name="Camargo L.E.A."/>
            <person name="Camarotte G."/>
            <person name="Cannavan F."/>
            <person name="Cardozo J."/>
            <person name="Chambergo F."/>
            <person name="Ciapina L.P."/>
            <person name="Cicarelli R.M.B."/>
            <person name="Coutinho L.L."/>
            <person name="Cursino-Santos J.R."/>
            <person name="El-Dorry H."/>
            <person name="Faria J.B."/>
            <person name="Ferreira A.J.S."/>
            <person name="Ferreira R.C.C."/>
            <person name="Ferro M.I.T."/>
            <person name="Formighieri E.F."/>
            <person name="Franco M.C."/>
            <person name="Greggio C.C."/>
            <person name="Gruber A."/>
            <person name="Katsuyama A.M."/>
            <person name="Kishi L.T."/>
            <person name="Leite R.P."/>
            <person name="Lemos E.G.M."/>
            <person name="Lemos M.V.F."/>
            <person name="Locali E.C."/>
            <person name="Machado M.A."/>
            <person name="Madeira A.M.B.N."/>
            <person name="Martinez-Rossi N.M."/>
            <person name="Martins E.C."/>
            <person name="Meidanis J."/>
            <person name="Menck C.F.M."/>
            <person name="Miyaki C.Y."/>
            <person name="Moon D.H."/>
            <person name="Moreira L.M."/>
            <person name="Novo M.T.M."/>
            <person name="Okura V.K."/>
            <person name="Oliveira M.C."/>
            <person name="Oliveira V.R."/>
            <person name="Pereira H.A."/>
            <person name="Rossi A."/>
            <person name="Sena J.A.D."/>
            <person name="Silva C."/>
            <person name="de Souza R.F."/>
            <person name="Spinola L.A.F."/>
            <person name="Takita M.A."/>
            <person name="Tamura R.E."/>
            <person name="Teixeira E.C."/>
            <person name="Tezza R.I.D."/>
            <person name="Trindade dos Santos M."/>
            <person name="Truffi D."/>
            <person name="Tsai S.M."/>
            <person name="White F.F."/>
            <person name="Setubal J.C."/>
            <person name="Kitajima J.P."/>
        </authorList>
    </citation>
    <scope>NUCLEOTIDE SEQUENCE [LARGE SCALE GENOMIC DNA]</scope>
    <source>
        <strain>306</strain>
    </source>
</reference>
<name>HIS2_XANAC</name>
<sequence>MGSNEVATGDPLATLDWNKGEGLLPVIVQDADNLRVLMLGYMNAQALAVTQQRGEVTFFSRSKQRLWTKGESSGNVLRVVSIQTDCDADTLLVQARPHGPTCHLGRTSCFPSAPGQFLGSLDALVAERERERPHGSYTTKLFEQGIRRIAQKVGEEGVETALAGVVQDDDALLGESADLLYHLIVLLRARGLGLGDAAALLESRHQ</sequence>
<proteinExistence type="inferred from homology"/>
<organism>
    <name type="scientific">Xanthomonas axonopodis pv. citri (strain 306)</name>
    <dbReference type="NCBI Taxonomy" id="190486"/>
    <lineage>
        <taxon>Bacteria</taxon>
        <taxon>Pseudomonadati</taxon>
        <taxon>Pseudomonadota</taxon>
        <taxon>Gammaproteobacteria</taxon>
        <taxon>Lysobacterales</taxon>
        <taxon>Lysobacteraceae</taxon>
        <taxon>Xanthomonas</taxon>
    </lineage>
</organism>
<protein>
    <recommendedName>
        <fullName evidence="1">Histidine biosynthesis bifunctional protein HisIE</fullName>
    </recommendedName>
    <domain>
        <recommendedName>
            <fullName evidence="1">Phosphoribosyl-AMP cyclohydrolase</fullName>
            <shortName evidence="1">PRA-CH</shortName>
            <ecNumber evidence="1">3.5.4.19</ecNumber>
        </recommendedName>
    </domain>
    <domain>
        <recommendedName>
            <fullName evidence="1">Phosphoribosyl-ATP pyrophosphatase</fullName>
            <shortName evidence="1">PRA-PH</shortName>
            <ecNumber evidence="1">3.6.1.31</ecNumber>
        </recommendedName>
    </domain>
</protein>
<dbReference type="EC" id="3.5.4.19" evidence="1"/>
<dbReference type="EC" id="3.6.1.31" evidence="1"/>
<dbReference type="EMBL" id="AE008923">
    <property type="protein sequence ID" value="AAM36697.1"/>
    <property type="molecule type" value="Genomic_DNA"/>
</dbReference>
<dbReference type="RefSeq" id="WP_003486226.1">
    <property type="nucleotide sequence ID" value="NC_003919.1"/>
</dbReference>
<dbReference type="SMR" id="Q8PLG5"/>
<dbReference type="GeneID" id="66910981"/>
<dbReference type="KEGG" id="xac:XAC1835"/>
<dbReference type="eggNOG" id="COG0139">
    <property type="taxonomic scope" value="Bacteria"/>
</dbReference>
<dbReference type="eggNOG" id="COG0140">
    <property type="taxonomic scope" value="Bacteria"/>
</dbReference>
<dbReference type="HOGENOM" id="CLU_048577_3_1_6"/>
<dbReference type="UniPathway" id="UPA00031">
    <property type="reaction ID" value="UER00007"/>
</dbReference>
<dbReference type="UniPathway" id="UPA00031">
    <property type="reaction ID" value="UER00008"/>
</dbReference>
<dbReference type="Proteomes" id="UP000000576">
    <property type="component" value="Chromosome"/>
</dbReference>
<dbReference type="GO" id="GO:0005737">
    <property type="term" value="C:cytoplasm"/>
    <property type="evidence" value="ECO:0007669"/>
    <property type="project" value="UniProtKB-SubCell"/>
</dbReference>
<dbReference type="GO" id="GO:0005524">
    <property type="term" value="F:ATP binding"/>
    <property type="evidence" value="ECO:0007669"/>
    <property type="project" value="UniProtKB-KW"/>
</dbReference>
<dbReference type="GO" id="GO:0004635">
    <property type="term" value="F:phosphoribosyl-AMP cyclohydrolase activity"/>
    <property type="evidence" value="ECO:0007669"/>
    <property type="project" value="UniProtKB-UniRule"/>
</dbReference>
<dbReference type="GO" id="GO:0004636">
    <property type="term" value="F:phosphoribosyl-ATP diphosphatase activity"/>
    <property type="evidence" value="ECO:0007669"/>
    <property type="project" value="UniProtKB-UniRule"/>
</dbReference>
<dbReference type="GO" id="GO:0000105">
    <property type="term" value="P:L-histidine biosynthetic process"/>
    <property type="evidence" value="ECO:0007669"/>
    <property type="project" value="UniProtKB-UniRule"/>
</dbReference>
<dbReference type="CDD" id="cd11534">
    <property type="entry name" value="NTP-PPase_HisIE_like"/>
    <property type="match status" value="1"/>
</dbReference>
<dbReference type="FunFam" id="3.10.20.810:FF:000001">
    <property type="entry name" value="Histidine biosynthesis bifunctional protein HisIE"/>
    <property type="match status" value="1"/>
</dbReference>
<dbReference type="Gene3D" id="1.10.287.1080">
    <property type="entry name" value="MazG-like"/>
    <property type="match status" value="1"/>
</dbReference>
<dbReference type="Gene3D" id="3.10.20.810">
    <property type="entry name" value="Phosphoribosyl-AMP cyclohydrolase"/>
    <property type="match status" value="1"/>
</dbReference>
<dbReference type="HAMAP" id="MF_01020">
    <property type="entry name" value="HisE"/>
    <property type="match status" value="1"/>
</dbReference>
<dbReference type="HAMAP" id="MF_01019">
    <property type="entry name" value="HisIE"/>
    <property type="match status" value="1"/>
</dbReference>
<dbReference type="InterPro" id="IPR023019">
    <property type="entry name" value="His_synth_HisIE"/>
</dbReference>
<dbReference type="InterPro" id="IPR008179">
    <property type="entry name" value="HisE"/>
</dbReference>
<dbReference type="InterPro" id="IPR021130">
    <property type="entry name" value="PRib-ATP_PPHydrolase-like"/>
</dbReference>
<dbReference type="InterPro" id="IPR002496">
    <property type="entry name" value="PRib_AMP_CycHydrolase_dom"/>
</dbReference>
<dbReference type="InterPro" id="IPR038019">
    <property type="entry name" value="PRib_AMP_CycHydrolase_sf"/>
</dbReference>
<dbReference type="NCBIfam" id="TIGR03188">
    <property type="entry name" value="histidine_hisI"/>
    <property type="match status" value="1"/>
</dbReference>
<dbReference type="NCBIfam" id="NF000768">
    <property type="entry name" value="PRK00051.1"/>
    <property type="match status" value="1"/>
</dbReference>
<dbReference type="NCBIfam" id="NF002747">
    <property type="entry name" value="PRK02759.1"/>
    <property type="match status" value="1"/>
</dbReference>
<dbReference type="PANTHER" id="PTHR42945">
    <property type="entry name" value="HISTIDINE BIOSYNTHESIS BIFUNCTIONAL PROTEIN"/>
    <property type="match status" value="1"/>
</dbReference>
<dbReference type="PANTHER" id="PTHR42945:SF9">
    <property type="entry name" value="HISTIDINE BIOSYNTHESIS BIFUNCTIONAL PROTEIN HISIE"/>
    <property type="match status" value="1"/>
</dbReference>
<dbReference type="Pfam" id="PF01502">
    <property type="entry name" value="PRA-CH"/>
    <property type="match status" value="1"/>
</dbReference>
<dbReference type="Pfam" id="PF01503">
    <property type="entry name" value="PRA-PH"/>
    <property type="match status" value="1"/>
</dbReference>
<dbReference type="SUPFAM" id="SSF101386">
    <property type="entry name" value="all-alpha NTP pyrophosphatases"/>
    <property type="match status" value="1"/>
</dbReference>
<dbReference type="SUPFAM" id="SSF141734">
    <property type="entry name" value="HisI-like"/>
    <property type="match status" value="1"/>
</dbReference>
<feature type="chain" id="PRO_0000136450" description="Histidine biosynthesis bifunctional protein HisIE">
    <location>
        <begin position="1"/>
        <end position="206"/>
    </location>
</feature>
<feature type="region of interest" description="Phosphoribosyl-AMP cyclohydrolase">
    <location>
        <begin position="1"/>
        <end position="117"/>
    </location>
</feature>
<feature type="region of interest" description="Phosphoribosyl-ATP pyrophosphohydrolase">
    <location>
        <begin position="118"/>
        <end position="206"/>
    </location>
</feature>
<accession>Q8PLG5</accession>
<evidence type="ECO:0000255" key="1">
    <source>
        <dbReference type="HAMAP-Rule" id="MF_01019"/>
    </source>
</evidence>
<gene>
    <name evidence="1" type="primary">hisI</name>
    <name evidence="1" type="synonym">hisIE</name>
    <name type="ordered locus">XAC1835</name>
</gene>
<comment type="catalytic activity">
    <reaction evidence="1">
        <text>1-(5-phospho-beta-D-ribosyl)-ATP + H2O = 1-(5-phospho-beta-D-ribosyl)-5'-AMP + diphosphate + H(+)</text>
        <dbReference type="Rhea" id="RHEA:22828"/>
        <dbReference type="ChEBI" id="CHEBI:15377"/>
        <dbReference type="ChEBI" id="CHEBI:15378"/>
        <dbReference type="ChEBI" id="CHEBI:33019"/>
        <dbReference type="ChEBI" id="CHEBI:59457"/>
        <dbReference type="ChEBI" id="CHEBI:73183"/>
        <dbReference type="EC" id="3.6.1.31"/>
    </reaction>
</comment>
<comment type="catalytic activity">
    <reaction evidence="1">
        <text>1-(5-phospho-beta-D-ribosyl)-5'-AMP + H2O = 1-(5-phospho-beta-D-ribosyl)-5-[(5-phospho-beta-D-ribosylamino)methylideneamino]imidazole-4-carboxamide</text>
        <dbReference type="Rhea" id="RHEA:20049"/>
        <dbReference type="ChEBI" id="CHEBI:15377"/>
        <dbReference type="ChEBI" id="CHEBI:58435"/>
        <dbReference type="ChEBI" id="CHEBI:59457"/>
        <dbReference type="EC" id="3.5.4.19"/>
    </reaction>
</comment>
<comment type="pathway">
    <text evidence="1">Amino-acid biosynthesis; L-histidine biosynthesis; L-histidine from 5-phospho-alpha-D-ribose 1-diphosphate: step 2/9.</text>
</comment>
<comment type="pathway">
    <text evidence="1">Amino-acid biosynthesis; L-histidine biosynthesis; L-histidine from 5-phospho-alpha-D-ribose 1-diphosphate: step 3/9.</text>
</comment>
<comment type="subcellular location">
    <subcellularLocation>
        <location evidence="1">Cytoplasm</location>
    </subcellularLocation>
</comment>
<comment type="similarity">
    <text evidence="1">In the N-terminal section; belongs to the PRA-CH family.</text>
</comment>
<comment type="similarity">
    <text evidence="1">In the C-terminal section; belongs to the PRA-PH family.</text>
</comment>
<keyword id="KW-0028">Amino-acid biosynthesis</keyword>
<keyword id="KW-0067">ATP-binding</keyword>
<keyword id="KW-0963">Cytoplasm</keyword>
<keyword id="KW-0368">Histidine biosynthesis</keyword>
<keyword id="KW-0378">Hydrolase</keyword>
<keyword id="KW-0511">Multifunctional enzyme</keyword>
<keyword id="KW-0547">Nucleotide-binding</keyword>